<evidence type="ECO:0000250" key="1"/>
<evidence type="ECO:0000269" key="2">
    <source>
    </source>
</evidence>
<evidence type="ECO:0000305" key="3"/>
<feature type="chain" id="PRO_0000116934" description="Adenosylhomocysteinase">
    <location>
        <begin position="1"/>
        <end position="450"/>
    </location>
</feature>
<feature type="binding site" evidence="1">
    <location>
        <position position="59"/>
    </location>
    <ligand>
        <name>substrate</name>
    </ligand>
</feature>
<feature type="binding site" evidence="1">
    <location>
        <position position="135"/>
    </location>
    <ligand>
        <name>substrate</name>
    </ligand>
</feature>
<feature type="binding site" evidence="1">
    <location>
        <position position="160"/>
    </location>
    <ligand>
        <name>substrate</name>
    </ligand>
</feature>
<feature type="binding site" evidence="1">
    <location>
        <begin position="161"/>
        <end position="163"/>
    </location>
    <ligand>
        <name>NAD(+)</name>
        <dbReference type="ChEBI" id="CHEBI:57540"/>
    </ligand>
</feature>
<feature type="binding site" evidence="1">
    <location>
        <position position="190"/>
    </location>
    <ligand>
        <name>substrate</name>
    </ligand>
</feature>
<feature type="binding site" evidence="1">
    <location>
        <position position="194"/>
    </location>
    <ligand>
        <name>substrate</name>
    </ligand>
</feature>
<feature type="binding site" evidence="1">
    <location>
        <position position="195"/>
    </location>
    <ligand>
        <name>NAD(+)</name>
        <dbReference type="ChEBI" id="CHEBI:57540"/>
    </ligand>
</feature>
<feature type="binding site" evidence="1">
    <location>
        <begin position="224"/>
        <end position="229"/>
    </location>
    <ligand>
        <name>NAD(+)</name>
        <dbReference type="ChEBI" id="CHEBI:57540"/>
    </ligand>
</feature>
<feature type="binding site" evidence="1">
    <location>
        <position position="247"/>
    </location>
    <ligand>
        <name>NAD(+)</name>
        <dbReference type="ChEBI" id="CHEBI:57540"/>
    </ligand>
</feature>
<feature type="binding site" evidence="1">
    <location>
        <begin position="303"/>
        <end position="305"/>
    </location>
    <ligand>
        <name>NAD(+)</name>
        <dbReference type="ChEBI" id="CHEBI:57540"/>
    </ligand>
</feature>
<feature type="binding site" evidence="1">
    <location>
        <position position="350"/>
    </location>
    <ligand>
        <name>NAD(+)</name>
        <dbReference type="ChEBI" id="CHEBI:57540"/>
    </ligand>
</feature>
<sequence length="450" mass="49072">MSSAPATNYKVADISLAAFGRKDIELSENEMPGLMYIRKKYGPSQPLKGARIAGCLHMTIQTAVLIETLVALGAEVTWSSCNIFSTQDHAAAAIAAAGVPVFAWKGETEEEYQWCIEQQLFAFKDGKKLNLILDDGGDLTSLVHEKYPEMLEDCYGLSEETTTGVHHLYKSLRDGKLKVPAINVNDSVTKSKFDNLYGCRESLVDGIKRATDVMIAGKVAIVAGFGDVGKGCAMALHGMGARVIVTEIDPINALQAAVSGYQVAPMDEVASIGQIFVTTTGCRDIITGKHFEQMPEDAIVCNIGHFDIEIDVAWLKANAESVVNIKPQVDRYLMKNGRHVILLADGRLVNLGCATGHSSFVMSCSFSNQVLAQIALFNADNKEFREKFPEFAKTGPFDVGVHLLPKVLDETVARCHLDHLGAKLTTLTETQAEYLGIPEEGPYKADIYRY</sequence>
<protein>
    <recommendedName>
        <fullName>Adenosylhomocysteinase</fullName>
        <shortName>AdoHcyase</shortName>
        <ecNumber>3.13.2.1</ecNumber>
    </recommendedName>
    <alternativeName>
        <fullName>S-adenosyl-L-homocysteine hydrolase</fullName>
    </alternativeName>
</protein>
<accession>P83783</accession>
<accession>A0A1D8PNY5</accession>
<accession>Q5AKA9</accession>
<dbReference type="EC" id="3.13.2.1"/>
<dbReference type="EMBL" id="CP017627">
    <property type="protein sequence ID" value="AOW29835.1"/>
    <property type="molecule type" value="Genomic_DNA"/>
</dbReference>
<dbReference type="RefSeq" id="XP_721821.1">
    <property type="nucleotide sequence ID" value="XM_716728.2"/>
</dbReference>
<dbReference type="SMR" id="P83783"/>
<dbReference type="FunCoup" id="P83783">
    <property type="interactions" value="1033"/>
</dbReference>
<dbReference type="STRING" id="237561.P83783"/>
<dbReference type="EnsemblFungi" id="C5_04270C_A-T">
    <property type="protein sequence ID" value="C5_04270C_A-T-p1"/>
    <property type="gene ID" value="C5_04270C_A"/>
</dbReference>
<dbReference type="GeneID" id="3636452"/>
<dbReference type="KEGG" id="cal:CAALFM_C504270CA"/>
<dbReference type="CGD" id="CAL0000201641">
    <property type="gene designation" value="SAH1"/>
</dbReference>
<dbReference type="VEuPathDB" id="FungiDB:C5_04270C_A"/>
<dbReference type="eggNOG" id="KOG1370">
    <property type="taxonomic scope" value="Eukaryota"/>
</dbReference>
<dbReference type="HOGENOM" id="CLU_025194_2_1_1"/>
<dbReference type="InParanoid" id="P83783"/>
<dbReference type="OMA" id="YIGVTVE"/>
<dbReference type="OrthoDB" id="10007170at2759"/>
<dbReference type="UniPathway" id="UPA00314">
    <property type="reaction ID" value="UER00076"/>
</dbReference>
<dbReference type="PRO" id="PR:P83783"/>
<dbReference type="Proteomes" id="UP000000559">
    <property type="component" value="Chromosome 5"/>
</dbReference>
<dbReference type="GO" id="GO:0005829">
    <property type="term" value="C:cytosol"/>
    <property type="evidence" value="ECO:0000318"/>
    <property type="project" value="GO_Central"/>
</dbReference>
<dbReference type="GO" id="GO:0005576">
    <property type="term" value="C:extracellular region"/>
    <property type="evidence" value="ECO:0000314"/>
    <property type="project" value="CGD"/>
</dbReference>
<dbReference type="GO" id="GO:0062040">
    <property type="term" value="C:fungal biofilm matrix"/>
    <property type="evidence" value="ECO:0000314"/>
    <property type="project" value="CGD"/>
</dbReference>
<dbReference type="GO" id="GO:0004013">
    <property type="term" value="F:adenosylhomocysteinase activity"/>
    <property type="evidence" value="ECO:0000318"/>
    <property type="project" value="GO_Central"/>
</dbReference>
<dbReference type="GO" id="GO:0006730">
    <property type="term" value="P:one-carbon metabolic process"/>
    <property type="evidence" value="ECO:0007669"/>
    <property type="project" value="UniProtKB-KW"/>
</dbReference>
<dbReference type="GO" id="GO:0006656">
    <property type="term" value="P:phosphatidylcholine biosynthetic process"/>
    <property type="evidence" value="ECO:0007669"/>
    <property type="project" value="EnsemblFungi"/>
</dbReference>
<dbReference type="GO" id="GO:0033353">
    <property type="term" value="P:S-adenosylmethionine cycle"/>
    <property type="evidence" value="ECO:0000318"/>
    <property type="project" value="GO_Central"/>
</dbReference>
<dbReference type="GO" id="GO:0006641">
    <property type="term" value="P:triglyceride metabolic process"/>
    <property type="evidence" value="ECO:0007669"/>
    <property type="project" value="EnsemblFungi"/>
</dbReference>
<dbReference type="CDD" id="cd00401">
    <property type="entry name" value="SAHH"/>
    <property type="match status" value="1"/>
</dbReference>
<dbReference type="FunFam" id="3.40.50.1480:FF:000004">
    <property type="entry name" value="Adenosylhomocysteinase"/>
    <property type="match status" value="1"/>
</dbReference>
<dbReference type="FunFam" id="3.40.50.720:FF:000004">
    <property type="entry name" value="Adenosylhomocysteinase"/>
    <property type="match status" value="1"/>
</dbReference>
<dbReference type="Gene3D" id="3.40.50.1480">
    <property type="entry name" value="Adenosylhomocysteinase-like"/>
    <property type="match status" value="1"/>
</dbReference>
<dbReference type="Gene3D" id="3.40.50.720">
    <property type="entry name" value="NAD(P)-binding Rossmann-like Domain"/>
    <property type="match status" value="1"/>
</dbReference>
<dbReference type="HAMAP" id="MF_00563">
    <property type="entry name" value="AdoHcyase"/>
    <property type="match status" value="1"/>
</dbReference>
<dbReference type="InterPro" id="IPR042172">
    <property type="entry name" value="Adenosylhomocyst_ase-like_sf"/>
</dbReference>
<dbReference type="InterPro" id="IPR000043">
    <property type="entry name" value="Adenosylhomocysteinase-like"/>
</dbReference>
<dbReference type="InterPro" id="IPR015878">
    <property type="entry name" value="Ado_hCys_hydrolase_NAD-bd"/>
</dbReference>
<dbReference type="InterPro" id="IPR036291">
    <property type="entry name" value="NAD(P)-bd_dom_sf"/>
</dbReference>
<dbReference type="InterPro" id="IPR020082">
    <property type="entry name" value="S-Ado-L-homoCys_hydrolase_CS"/>
</dbReference>
<dbReference type="NCBIfam" id="TIGR00936">
    <property type="entry name" value="ahcY"/>
    <property type="match status" value="1"/>
</dbReference>
<dbReference type="NCBIfam" id="NF004005">
    <property type="entry name" value="PRK05476.2-3"/>
    <property type="match status" value="1"/>
</dbReference>
<dbReference type="PANTHER" id="PTHR23420">
    <property type="entry name" value="ADENOSYLHOMOCYSTEINASE"/>
    <property type="match status" value="1"/>
</dbReference>
<dbReference type="PANTHER" id="PTHR23420:SF0">
    <property type="entry name" value="ADENOSYLHOMOCYSTEINASE"/>
    <property type="match status" value="1"/>
</dbReference>
<dbReference type="Pfam" id="PF05221">
    <property type="entry name" value="AdoHcyase"/>
    <property type="match status" value="1"/>
</dbReference>
<dbReference type="Pfam" id="PF00670">
    <property type="entry name" value="AdoHcyase_NAD"/>
    <property type="match status" value="1"/>
</dbReference>
<dbReference type="PIRSF" id="PIRSF001109">
    <property type="entry name" value="Ad_hcy_hydrolase"/>
    <property type="match status" value="1"/>
</dbReference>
<dbReference type="SMART" id="SM00996">
    <property type="entry name" value="AdoHcyase"/>
    <property type="match status" value="1"/>
</dbReference>
<dbReference type="SMART" id="SM00997">
    <property type="entry name" value="AdoHcyase_NAD"/>
    <property type="match status" value="1"/>
</dbReference>
<dbReference type="SUPFAM" id="SSF52283">
    <property type="entry name" value="Formate/glycerate dehydrogenase catalytic domain-like"/>
    <property type="match status" value="1"/>
</dbReference>
<dbReference type="SUPFAM" id="SSF51735">
    <property type="entry name" value="NAD(P)-binding Rossmann-fold domains"/>
    <property type="match status" value="1"/>
</dbReference>
<dbReference type="PROSITE" id="PS00738">
    <property type="entry name" value="ADOHCYASE_1"/>
    <property type="match status" value="1"/>
</dbReference>
<dbReference type="PROSITE" id="PS00739">
    <property type="entry name" value="ADOHCYASE_2"/>
    <property type="match status" value="1"/>
</dbReference>
<organism>
    <name type="scientific">Candida albicans (strain SC5314 / ATCC MYA-2876)</name>
    <name type="common">Yeast</name>
    <dbReference type="NCBI Taxonomy" id="237561"/>
    <lineage>
        <taxon>Eukaryota</taxon>
        <taxon>Fungi</taxon>
        <taxon>Dikarya</taxon>
        <taxon>Ascomycota</taxon>
        <taxon>Saccharomycotina</taxon>
        <taxon>Pichiomycetes</taxon>
        <taxon>Debaryomycetaceae</taxon>
        <taxon>Candida/Lodderomyces clade</taxon>
        <taxon>Candida</taxon>
    </lineage>
</organism>
<gene>
    <name type="primary">SAH1</name>
    <name type="ordered locus">CAALFM_C504270CA</name>
    <name type="ORF">CaO19.11392</name>
    <name type="ORF">CaO19.3911</name>
</gene>
<keyword id="KW-0963">Cytoplasm</keyword>
<keyword id="KW-0903">Direct protein sequencing</keyword>
<keyword id="KW-0378">Hydrolase</keyword>
<keyword id="KW-0520">NAD</keyword>
<keyword id="KW-0554">One-carbon metabolism</keyword>
<keyword id="KW-1185">Reference proteome</keyword>
<comment type="function">
    <text evidence="1">Adenosylhomocysteine is a competitive inhibitor of S-adenosyl-L-methionine-dependent methyl transferase reactions; therefore adenosylhomocysteinase may play a key role in the control of methylations via regulation of the intracellular concentration of adenosylhomocysteine.</text>
</comment>
<comment type="catalytic activity">
    <reaction>
        <text>S-adenosyl-L-homocysteine + H2O = L-homocysteine + adenosine</text>
        <dbReference type="Rhea" id="RHEA:21708"/>
        <dbReference type="ChEBI" id="CHEBI:15377"/>
        <dbReference type="ChEBI" id="CHEBI:16335"/>
        <dbReference type="ChEBI" id="CHEBI:57856"/>
        <dbReference type="ChEBI" id="CHEBI:58199"/>
        <dbReference type="EC" id="3.13.2.1"/>
    </reaction>
</comment>
<comment type="cofactor">
    <cofactor evidence="1">
        <name>NAD(+)</name>
        <dbReference type="ChEBI" id="CHEBI:57540"/>
    </cofactor>
    <text evidence="1">Binds 1 NAD(+) per subunit.</text>
</comment>
<comment type="pathway">
    <text>Amino-acid biosynthesis; L-homocysteine biosynthesis; L-homocysteine from S-adenosyl-L-homocysteine: step 1/1.</text>
</comment>
<comment type="subcellular location">
    <subcellularLocation>
        <location evidence="2">Cytoplasm</location>
    </subcellularLocation>
</comment>
<comment type="miscellaneous">
    <text>Has antigenic properties. Elicits a specific immune response in systemic candidiasis human patients undergoing malignant hematological disorders.</text>
</comment>
<comment type="similarity">
    <text evidence="3">Belongs to the adenosylhomocysteinase family.</text>
</comment>
<reference key="1">
    <citation type="journal article" date="2004" name="Proc. Natl. Acad. Sci. U.S.A.">
        <title>The diploid genome sequence of Candida albicans.</title>
        <authorList>
            <person name="Jones T."/>
            <person name="Federspiel N.A."/>
            <person name="Chibana H."/>
            <person name="Dungan J."/>
            <person name="Kalman S."/>
            <person name="Magee B.B."/>
            <person name="Newport G."/>
            <person name="Thorstenson Y.R."/>
            <person name="Agabian N."/>
            <person name="Magee P.T."/>
            <person name="Davis R.W."/>
            <person name="Scherer S."/>
        </authorList>
    </citation>
    <scope>NUCLEOTIDE SEQUENCE [LARGE SCALE GENOMIC DNA]</scope>
    <source>
        <strain>SC5314 / ATCC MYA-2876</strain>
    </source>
</reference>
<reference key="2">
    <citation type="journal article" date="2007" name="Genome Biol.">
        <title>Assembly of the Candida albicans genome into sixteen supercontigs aligned on the eight chromosomes.</title>
        <authorList>
            <person name="van het Hoog M."/>
            <person name="Rast T.J."/>
            <person name="Martchenko M."/>
            <person name="Grindle S."/>
            <person name="Dignard D."/>
            <person name="Hogues H."/>
            <person name="Cuomo C."/>
            <person name="Berriman M."/>
            <person name="Scherer S."/>
            <person name="Magee B.B."/>
            <person name="Whiteway M."/>
            <person name="Chibana H."/>
            <person name="Nantel A."/>
            <person name="Magee P.T."/>
        </authorList>
    </citation>
    <scope>GENOME REANNOTATION</scope>
    <source>
        <strain>SC5314 / ATCC MYA-2876</strain>
    </source>
</reference>
<reference key="3">
    <citation type="journal article" date="2013" name="Genome Biol.">
        <title>Assembly of a phased diploid Candida albicans genome facilitates allele-specific measurements and provides a simple model for repeat and indel structure.</title>
        <authorList>
            <person name="Muzzey D."/>
            <person name="Schwartz K."/>
            <person name="Weissman J.S."/>
            <person name="Sherlock G."/>
        </authorList>
    </citation>
    <scope>NUCLEOTIDE SEQUENCE [LARGE SCALE GENOMIC DNA]</scope>
    <scope>GENOME REANNOTATION</scope>
    <source>
        <strain>SC5314 / ATCC MYA-2876</strain>
    </source>
</reference>
<reference key="4">
    <citation type="journal article" date="2004" name="Proteomics">
        <title>Proteomics-based identification of novel Candida albicans antigens for diagnosis of systemic candidiasis in patients with underlying hematological malignancies.</title>
        <authorList>
            <person name="Pitarch A."/>
            <person name="Abian J."/>
            <person name="Carrascal M."/>
            <person name="Sanchez M."/>
            <person name="Nombela C."/>
            <person name="Gil C."/>
        </authorList>
    </citation>
    <scope>PROTEIN SEQUENCE OF 179-190 AND 193-200</scope>
    <scope>SUBCELLULAR LOCATION</scope>
    <scope>ANTIGENICITY</scope>
    <source>
        <strain>SC5314 / ATCC MYA-2876</strain>
        <tissue>Protoplast</tissue>
    </source>
</reference>
<proteinExistence type="evidence at protein level"/>
<name>SAHH_CANAL</name>